<reference key="1">
    <citation type="journal article" date="2004" name="Nat. Genet.">
        <title>Complete sequencing and characterization of 21,243 full-length human cDNAs.</title>
        <authorList>
            <person name="Ota T."/>
            <person name="Suzuki Y."/>
            <person name="Nishikawa T."/>
            <person name="Otsuki T."/>
            <person name="Sugiyama T."/>
            <person name="Irie R."/>
            <person name="Wakamatsu A."/>
            <person name="Hayashi K."/>
            <person name="Sato H."/>
            <person name="Nagai K."/>
            <person name="Kimura K."/>
            <person name="Makita H."/>
            <person name="Sekine M."/>
            <person name="Obayashi M."/>
            <person name="Nishi T."/>
            <person name="Shibahara T."/>
            <person name="Tanaka T."/>
            <person name="Ishii S."/>
            <person name="Yamamoto J."/>
            <person name="Saito K."/>
            <person name="Kawai Y."/>
            <person name="Isono Y."/>
            <person name="Nakamura Y."/>
            <person name="Nagahari K."/>
            <person name="Murakami K."/>
            <person name="Yasuda T."/>
            <person name="Iwayanagi T."/>
            <person name="Wagatsuma M."/>
            <person name="Shiratori A."/>
            <person name="Sudo H."/>
            <person name="Hosoiri T."/>
            <person name="Kaku Y."/>
            <person name="Kodaira H."/>
            <person name="Kondo H."/>
            <person name="Sugawara M."/>
            <person name="Takahashi M."/>
            <person name="Kanda K."/>
            <person name="Yokoi T."/>
            <person name="Furuya T."/>
            <person name="Kikkawa E."/>
            <person name="Omura Y."/>
            <person name="Abe K."/>
            <person name="Kamihara K."/>
            <person name="Katsuta N."/>
            <person name="Sato K."/>
            <person name="Tanikawa M."/>
            <person name="Yamazaki M."/>
            <person name="Ninomiya K."/>
            <person name="Ishibashi T."/>
            <person name="Yamashita H."/>
            <person name="Murakawa K."/>
            <person name="Fujimori K."/>
            <person name="Tanai H."/>
            <person name="Kimata M."/>
            <person name="Watanabe M."/>
            <person name="Hiraoka S."/>
            <person name="Chiba Y."/>
            <person name="Ishida S."/>
            <person name="Ono Y."/>
            <person name="Takiguchi S."/>
            <person name="Watanabe S."/>
            <person name="Yosida M."/>
            <person name="Hotuta T."/>
            <person name="Kusano J."/>
            <person name="Kanehori K."/>
            <person name="Takahashi-Fujii A."/>
            <person name="Hara H."/>
            <person name="Tanase T.-O."/>
            <person name="Nomura Y."/>
            <person name="Togiya S."/>
            <person name="Komai F."/>
            <person name="Hara R."/>
            <person name="Takeuchi K."/>
            <person name="Arita M."/>
            <person name="Imose N."/>
            <person name="Musashino K."/>
            <person name="Yuuki H."/>
            <person name="Oshima A."/>
            <person name="Sasaki N."/>
            <person name="Aotsuka S."/>
            <person name="Yoshikawa Y."/>
            <person name="Matsunawa H."/>
            <person name="Ichihara T."/>
            <person name="Shiohata N."/>
            <person name="Sano S."/>
            <person name="Moriya S."/>
            <person name="Momiyama H."/>
            <person name="Satoh N."/>
            <person name="Takami S."/>
            <person name="Terashima Y."/>
            <person name="Suzuki O."/>
            <person name="Nakagawa S."/>
            <person name="Senoh A."/>
            <person name="Mizoguchi H."/>
            <person name="Goto Y."/>
            <person name="Shimizu F."/>
            <person name="Wakebe H."/>
            <person name="Hishigaki H."/>
            <person name="Watanabe T."/>
            <person name="Sugiyama A."/>
            <person name="Takemoto M."/>
            <person name="Kawakami B."/>
            <person name="Yamazaki M."/>
            <person name="Watanabe K."/>
            <person name="Kumagai A."/>
            <person name="Itakura S."/>
            <person name="Fukuzumi Y."/>
            <person name="Fujimori Y."/>
            <person name="Komiyama M."/>
            <person name="Tashiro H."/>
            <person name="Tanigami A."/>
            <person name="Fujiwara T."/>
            <person name="Ono T."/>
            <person name="Yamada K."/>
            <person name="Fujii Y."/>
            <person name="Ozaki K."/>
            <person name="Hirao M."/>
            <person name="Ohmori Y."/>
            <person name="Kawabata A."/>
            <person name="Hikiji T."/>
            <person name="Kobatake N."/>
            <person name="Inagaki H."/>
            <person name="Ikema Y."/>
            <person name="Okamoto S."/>
            <person name="Okitani R."/>
            <person name="Kawakami T."/>
            <person name="Noguchi S."/>
            <person name="Itoh T."/>
            <person name="Shigeta K."/>
            <person name="Senba T."/>
            <person name="Matsumura K."/>
            <person name="Nakajima Y."/>
            <person name="Mizuno T."/>
            <person name="Morinaga M."/>
            <person name="Sasaki M."/>
            <person name="Togashi T."/>
            <person name="Oyama M."/>
            <person name="Hata H."/>
            <person name="Watanabe M."/>
            <person name="Komatsu T."/>
            <person name="Mizushima-Sugano J."/>
            <person name="Satoh T."/>
            <person name="Shirai Y."/>
            <person name="Takahashi Y."/>
            <person name="Nakagawa K."/>
            <person name="Okumura K."/>
            <person name="Nagase T."/>
            <person name="Nomura N."/>
            <person name="Kikuchi H."/>
            <person name="Masuho Y."/>
            <person name="Yamashita R."/>
            <person name="Nakai K."/>
            <person name="Yada T."/>
            <person name="Nakamura Y."/>
            <person name="Ohara O."/>
            <person name="Isogai T."/>
            <person name="Sugano S."/>
        </authorList>
    </citation>
    <scope>NUCLEOTIDE SEQUENCE [LARGE SCALE MRNA]</scope>
    <scope>VARIANT THR-68</scope>
    <source>
        <tissue>Caudate nucleus</tissue>
    </source>
</reference>
<reference key="2">
    <citation type="journal article" date="2004" name="Nature">
        <title>DNA sequence and analysis of human chromosome 9.</title>
        <authorList>
            <person name="Humphray S.J."/>
            <person name="Oliver K."/>
            <person name="Hunt A.R."/>
            <person name="Plumb R.W."/>
            <person name="Loveland J.E."/>
            <person name="Howe K.L."/>
            <person name="Andrews T.D."/>
            <person name="Searle S."/>
            <person name="Hunt S.E."/>
            <person name="Scott C.E."/>
            <person name="Jones M.C."/>
            <person name="Ainscough R."/>
            <person name="Almeida J.P."/>
            <person name="Ambrose K.D."/>
            <person name="Ashwell R.I.S."/>
            <person name="Babbage A.K."/>
            <person name="Babbage S."/>
            <person name="Bagguley C.L."/>
            <person name="Bailey J."/>
            <person name="Banerjee R."/>
            <person name="Barker D.J."/>
            <person name="Barlow K.F."/>
            <person name="Bates K."/>
            <person name="Beasley H."/>
            <person name="Beasley O."/>
            <person name="Bird C.P."/>
            <person name="Bray-Allen S."/>
            <person name="Brown A.J."/>
            <person name="Brown J.Y."/>
            <person name="Burford D."/>
            <person name="Burrill W."/>
            <person name="Burton J."/>
            <person name="Carder C."/>
            <person name="Carter N.P."/>
            <person name="Chapman J.C."/>
            <person name="Chen Y."/>
            <person name="Clarke G."/>
            <person name="Clark S.Y."/>
            <person name="Clee C.M."/>
            <person name="Clegg S."/>
            <person name="Collier R.E."/>
            <person name="Corby N."/>
            <person name="Crosier M."/>
            <person name="Cummings A.T."/>
            <person name="Davies J."/>
            <person name="Dhami P."/>
            <person name="Dunn M."/>
            <person name="Dutta I."/>
            <person name="Dyer L.W."/>
            <person name="Earthrowl M.E."/>
            <person name="Faulkner L."/>
            <person name="Fleming C.J."/>
            <person name="Frankish A."/>
            <person name="Frankland J.A."/>
            <person name="French L."/>
            <person name="Fricker D.G."/>
            <person name="Garner P."/>
            <person name="Garnett J."/>
            <person name="Ghori J."/>
            <person name="Gilbert J.G.R."/>
            <person name="Glison C."/>
            <person name="Grafham D.V."/>
            <person name="Gribble S."/>
            <person name="Griffiths C."/>
            <person name="Griffiths-Jones S."/>
            <person name="Grocock R."/>
            <person name="Guy J."/>
            <person name="Hall R.E."/>
            <person name="Hammond S."/>
            <person name="Harley J.L."/>
            <person name="Harrison E.S.I."/>
            <person name="Hart E.A."/>
            <person name="Heath P.D."/>
            <person name="Henderson C.D."/>
            <person name="Hopkins B.L."/>
            <person name="Howard P.J."/>
            <person name="Howden P.J."/>
            <person name="Huckle E."/>
            <person name="Johnson C."/>
            <person name="Johnson D."/>
            <person name="Joy A.A."/>
            <person name="Kay M."/>
            <person name="Keenan S."/>
            <person name="Kershaw J.K."/>
            <person name="Kimberley A.M."/>
            <person name="King A."/>
            <person name="Knights A."/>
            <person name="Laird G.K."/>
            <person name="Langford C."/>
            <person name="Lawlor S."/>
            <person name="Leongamornlert D.A."/>
            <person name="Leversha M."/>
            <person name="Lloyd C."/>
            <person name="Lloyd D.M."/>
            <person name="Lovell J."/>
            <person name="Martin S."/>
            <person name="Mashreghi-Mohammadi M."/>
            <person name="Matthews L."/>
            <person name="McLaren S."/>
            <person name="McLay K.E."/>
            <person name="McMurray A."/>
            <person name="Milne S."/>
            <person name="Nickerson T."/>
            <person name="Nisbett J."/>
            <person name="Nordsiek G."/>
            <person name="Pearce A.V."/>
            <person name="Peck A.I."/>
            <person name="Porter K.M."/>
            <person name="Pandian R."/>
            <person name="Pelan S."/>
            <person name="Phillimore B."/>
            <person name="Povey S."/>
            <person name="Ramsey Y."/>
            <person name="Rand V."/>
            <person name="Scharfe M."/>
            <person name="Sehra H.K."/>
            <person name="Shownkeen R."/>
            <person name="Sims S.K."/>
            <person name="Skuce C.D."/>
            <person name="Smith M."/>
            <person name="Steward C.A."/>
            <person name="Swarbreck D."/>
            <person name="Sycamore N."/>
            <person name="Tester J."/>
            <person name="Thorpe A."/>
            <person name="Tracey A."/>
            <person name="Tromans A."/>
            <person name="Thomas D.W."/>
            <person name="Wall M."/>
            <person name="Wallis J.M."/>
            <person name="West A.P."/>
            <person name="Whitehead S.L."/>
            <person name="Willey D.L."/>
            <person name="Williams S.A."/>
            <person name="Wilming L."/>
            <person name="Wray P.W."/>
            <person name="Young L."/>
            <person name="Ashurst J.L."/>
            <person name="Coulson A."/>
            <person name="Blocker H."/>
            <person name="Durbin R.M."/>
            <person name="Sulston J.E."/>
            <person name="Hubbard T."/>
            <person name="Jackson M.J."/>
            <person name="Bentley D.R."/>
            <person name="Beck S."/>
            <person name="Rogers J."/>
            <person name="Dunham I."/>
        </authorList>
    </citation>
    <scope>NUCLEOTIDE SEQUENCE [LARGE SCALE GENOMIC DNA]</scope>
</reference>
<evidence type="ECO:0000269" key="1">
    <source>
    </source>
</evidence>
<evidence type="ECO:0000305" key="2"/>
<protein>
    <recommendedName>
        <fullName>Lipocalin-like 1 protein</fullName>
    </recommendedName>
</protein>
<gene>
    <name type="primary">LCNL1</name>
</gene>
<organism>
    <name type="scientific">Homo sapiens</name>
    <name type="common">Human</name>
    <dbReference type="NCBI Taxonomy" id="9606"/>
    <lineage>
        <taxon>Eukaryota</taxon>
        <taxon>Metazoa</taxon>
        <taxon>Chordata</taxon>
        <taxon>Craniata</taxon>
        <taxon>Vertebrata</taxon>
        <taxon>Euteleostomi</taxon>
        <taxon>Mammalia</taxon>
        <taxon>Eutheria</taxon>
        <taxon>Euarchontoglires</taxon>
        <taxon>Primates</taxon>
        <taxon>Haplorrhini</taxon>
        <taxon>Catarrhini</taxon>
        <taxon>Hominidae</taxon>
        <taxon>Homo</taxon>
    </lineage>
</organism>
<proteinExistence type="evidence at transcript level"/>
<keyword id="KW-1185">Reference proteome</keyword>
<sequence>MVGVVSDDQDFLDSKDTMKMAVVLVTPLGNGDLALKFGYPTPHGGCQKMDTTFTEGAVPGQFSNPAMALSDIRVAFSDYQHFALLYLEMRKGGLRNQWLQLYGGRAAGRRPRHPRFGSGMSPLCLHQPFLHAEGGTAGSWCLWPRVPAPPCPSLPLFAPPAPSL</sequence>
<name>LCNL1_HUMAN</name>
<feature type="chain" id="PRO_0000348470" description="Lipocalin-like 1 protein">
    <location>
        <begin position="1"/>
        <end position="164"/>
    </location>
</feature>
<feature type="sequence variant" id="VAR_046189" description="In dbSNP:rs17578859." evidence="1">
    <original>A</original>
    <variation>T</variation>
    <location>
        <position position="68"/>
    </location>
</feature>
<comment type="similarity">
    <text evidence="2">Belongs to the calycin superfamily. Lipocalin family.</text>
</comment>
<accession>Q6ZST4</accession>
<dbReference type="EMBL" id="AK127160">
    <property type="protein sequence ID" value="BAC86862.1"/>
    <property type="molecule type" value="mRNA"/>
</dbReference>
<dbReference type="EMBL" id="AL807752">
    <property type="status" value="NOT_ANNOTATED_CDS"/>
    <property type="molecule type" value="Genomic_DNA"/>
</dbReference>
<dbReference type="CCDS" id="CCDS43908.1"/>
<dbReference type="RefSeq" id="NP_997393.3">
    <property type="nucleotide sequence ID" value="NM_207510.3"/>
</dbReference>
<dbReference type="SMR" id="Q6ZST4"/>
<dbReference type="BioGRID" id="135151">
    <property type="interactions" value="2"/>
</dbReference>
<dbReference type="IntAct" id="Q6ZST4">
    <property type="interactions" value="2"/>
</dbReference>
<dbReference type="MINT" id="Q6ZST4"/>
<dbReference type="STRING" id="9606.ENSP00000386162"/>
<dbReference type="iPTMnet" id="Q6ZST4"/>
<dbReference type="PhosphoSitePlus" id="Q6ZST4"/>
<dbReference type="BioMuta" id="LCNL1"/>
<dbReference type="DMDM" id="296434562"/>
<dbReference type="PaxDb" id="9606-ENSP00000386162"/>
<dbReference type="Antibodypedia" id="66991">
    <property type="antibodies" value="14 antibodies from 5 providers"/>
</dbReference>
<dbReference type="DNASU" id="401562"/>
<dbReference type="Ensembl" id="ENST00000408973.3">
    <property type="protein sequence ID" value="ENSP00000386162.2"/>
    <property type="gene ID" value="ENSG00000214402.7"/>
</dbReference>
<dbReference type="GeneID" id="401562"/>
<dbReference type="KEGG" id="hsa:401562"/>
<dbReference type="MANE-Select" id="ENST00000408973.3">
    <property type="protein sequence ID" value="ENSP00000386162.2"/>
    <property type="RefSeq nucleotide sequence ID" value="NM_207510.4"/>
    <property type="RefSeq protein sequence ID" value="NP_997393.3"/>
</dbReference>
<dbReference type="UCSC" id="uc004ckh.2">
    <property type="organism name" value="human"/>
</dbReference>
<dbReference type="AGR" id="HGNC:34436"/>
<dbReference type="CTD" id="401562"/>
<dbReference type="GeneCards" id="LCNL1"/>
<dbReference type="HGNC" id="HGNC:34436">
    <property type="gene designation" value="LCNL1"/>
</dbReference>
<dbReference type="HPA" id="ENSG00000214402">
    <property type="expression patterns" value="Tissue enhanced (brain, testis)"/>
</dbReference>
<dbReference type="neXtProt" id="NX_Q6ZST4"/>
<dbReference type="OpenTargets" id="ENSG00000214402"/>
<dbReference type="PharmGKB" id="PA164722092"/>
<dbReference type="VEuPathDB" id="HostDB:ENSG00000214402"/>
<dbReference type="eggNOG" id="ENOG502S0P6">
    <property type="taxonomic scope" value="Eukaryota"/>
</dbReference>
<dbReference type="GeneTree" id="ENSGT01050000244868"/>
<dbReference type="HOGENOM" id="CLU_1622841_0_0_1"/>
<dbReference type="InParanoid" id="Q6ZST4"/>
<dbReference type="OMA" id="MSPLCLH"/>
<dbReference type="OrthoDB" id="9627583at2759"/>
<dbReference type="PAN-GO" id="Q6ZST4">
    <property type="GO annotations" value="0 GO annotations based on evolutionary models"/>
</dbReference>
<dbReference type="PhylomeDB" id="Q6ZST4"/>
<dbReference type="PathwayCommons" id="Q6ZST4"/>
<dbReference type="SignaLink" id="Q6ZST4"/>
<dbReference type="BioGRID-ORCS" id="401562">
    <property type="hits" value="19 hits in 1135 CRISPR screens"/>
</dbReference>
<dbReference type="ChiTaRS" id="LCNL1">
    <property type="organism name" value="human"/>
</dbReference>
<dbReference type="GenomeRNAi" id="401562"/>
<dbReference type="Pharos" id="Q6ZST4">
    <property type="development level" value="Tdark"/>
</dbReference>
<dbReference type="PRO" id="PR:Q6ZST4"/>
<dbReference type="Proteomes" id="UP000005640">
    <property type="component" value="Chromosome 9"/>
</dbReference>
<dbReference type="RNAct" id="Q6ZST4">
    <property type="molecule type" value="protein"/>
</dbReference>
<dbReference type="Bgee" id="ENSG00000214402">
    <property type="expression patterns" value="Expressed in male germ line stem cell (sensu Vertebrata) in testis and 83 other cell types or tissues"/>
</dbReference>
<dbReference type="GO" id="GO:0036094">
    <property type="term" value="F:small molecule binding"/>
    <property type="evidence" value="ECO:0007669"/>
    <property type="project" value="InterPro"/>
</dbReference>
<dbReference type="Gene3D" id="2.40.128.20">
    <property type="match status" value="1"/>
</dbReference>
<dbReference type="InterPro" id="IPR012674">
    <property type="entry name" value="Calycin"/>
</dbReference>
<dbReference type="InterPro" id="IPR002345">
    <property type="entry name" value="Lipocalin"/>
</dbReference>
<dbReference type="InterPro" id="IPR000566">
    <property type="entry name" value="Lipocln_cytosolic_FA-bd_dom"/>
</dbReference>
<dbReference type="PANTHER" id="PTHR11430">
    <property type="entry name" value="LIPOCALIN"/>
    <property type="match status" value="1"/>
</dbReference>
<dbReference type="PANTHER" id="PTHR11430:SF77">
    <property type="entry name" value="LIPOCALIN-LIKE 1 PROTEIN"/>
    <property type="match status" value="1"/>
</dbReference>
<dbReference type="Pfam" id="PF00061">
    <property type="entry name" value="Lipocalin"/>
    <property type="match status" value="1"/>
</dbReference>
<dbReference type="SUPFAM" id="SSF50814">
    <property type="entry name" value="Lipocalins"/>
    <property type="match status" value="1"/>
</dbReference>